<proteinExistence type="inferred from homology"/>
<name>DAPH_STRGC</name>
<organism>
    <name type="scientific">Streptococcus gordonii (strain Challis / ATCC 35105 / BCRC 15272 / CH1 / DL1 / V288)</name>
    <dbReference type="NCBI Taxonomy" id="467705"/>
    <lineage>
        <taxon>Bacteria</taxon>
        <taxon>Bacillati</taxon>
        <taxon>Bacillota</taxon>
        <taxon>Bacilli</taxon>
        <taxon>Lactobacillales</taxon>
        <taxon>Streptococcaceae</taxon>
        <taxon>Streptococcus</taxon>
    </lineage>
</organism>
<reference key="1">
    <citation type="journal article" date="2007" name="J. Bacteriol.">
        <title>Genome-wide transcriptional changes in Streptococcus gordonii in response to competence signaling peptide.</title>
        <authorList>
            <person name="Vickerman M.M."/>
            <person name="Iobst S."/>
            <person name="Jesionowski A.M."/>
            <person name="Gill S.R."/>
        </authorList>
    </citation>
    <scope>NUCLEOTIDE SEQUENCE [LARGE SCALE GENOMIC DNA]</scope>
    <source>
        <strain>Challis / ATCC 35105 / BCRC 15272 / CH1 / DL1 / V288</strain>
    </source>
</reference>
<gene>
    <name evidence="1" type="primary">dapH</name>
    <name type="ordered locus">SGO_0158</name>
</gene>
<accession>A8AUL9</accession>
<evidence type="ECO:0000255" key="1">
    <source>
        <dbReference type="HAMAP-Rule" id="MF_01691"/>
    </source>
</evidence>
<dbReference type="EC" id="2.3.1.89" evidence="1"/>
<dbReference type="EMBL" id="CP000725">
    <property type="protein sequence ID" value="ABV10130.1"/>
    <property type="molecule type" value="Genomic_DNA"/>
</dbReference>
<dbReference type="SMR" id="A8AUL9"/>
<dbReference type="STRING" id="467705.SGO_0158"/>
<dbReference type="KEGG" id="sgo:SGO_0158"/>
<dbReference type="eggNOG" id="COG2171">
    <property type="taxonomic scope" value="Bacteria"/>
</dbReference>
<dbReference type="HOGENOM" id="CLU_103751_0_0_9"/>
<dbReference type="UniPathway" id="UPA00034">
    <property type="reaction ID" value="UER00022"/>
</dbReference>
<dbReference type="Proteomes" id="UP000001131">
    <property type="component" value="Chromosome"/>
</dbReference>
<dbReference type="GO" id="GO:0047200">
    <property type="term" value="F:tetrahydrodipicolinate N-acetyltransferase activity"/>
    <property type="evidence" value="ECO:0007669"/>
    <property type="project" value="UniProtKB-EC"/>
</dbReference>
<dbReference type="GO" id="GO:0019877">
    <property type="term" value="P:diaminopimelate biosynthetic process"/>
    <property type="evidence" value="ECO:0007669"/>
    <property type="project" value="UniProtKB-UniRule"/>
</dbReference>
<dbReference type="GO" id="GO:0009089">
    <property type="term" value="P:lysine biosynthetic process via diaminopimelate"/>
    <property type="evidence" value="ECO:0007669"/>
    <property type="project" value="UniProtKB-UniRule"/>
</dbReference>
<dbReference type="CDD" id="cd03350">
    <property type="entry name" value="LbH_THP_succinylT"/>
    <property type="match status" value="1"/>
</dbReference>
<dbReference type="Gene3D" id="2.160.10.10">
    <property type="entry name" value="Hexapeptide repeat proteins"/>
    <property type="match status" value="1"/>
</dbReference>
<dbReference type="Gene3D" id="3.30.70.250">
    <property type="entry name" value="Malonyl-CoA ACP transacylase, ACP-binding"/>
    <property type="match status" value="1"/>
</dbReference>
<dbReference type="HAMAP" id="MF_01691">
    <property type="entry name" value="DapH"/>
    <property type="match status" value="1"/>
</dbReference>
<dbReference type="InterPro" id="IPR019873">
    <property type="entry name" value="DapH"/>
</dbReference>
<dbReference type="InterPro" id="IPR013710">
    <property type="entry name" value="DapH_N"/>
</dbReference>
<dbReference type="InterPro" id="IPR001451">
    <property type="entry name" value="Hexapep"/>
</dbReference>
<dbReference type="InterPro" id="IPR018357">
    <property type="entry name" value="Hexapep_transf_CS"/>
</dbReference>
<dbReference type="InterPro" id="IPR050179">
    <property type="entry name" value="Trans_hexapeptide_repeat"/>
</dbReference>
<dbReference type="InterPro" id="IPR011004">
    <property type="entry name" value="Trimer_LpxA-like_sf"/>
</dbReference>
<dbReference type="NCBIfam" id="TIGR03532">
    <property type="entry name" value="DapD_Ac"/>
    <property type="match status" value="1"/>
</dbReference>
<dbReference type="PANTHER" id="PTHR43300:SF10">
    <property type="entry name" value="2,3,4,5-TETRAHYDROPYRIDINE-2,6-DICARBOXYLATE N-ACETYLTRANSFERASE"/>
    <property type="match status" value="1"/>
</dbReference>
<dbReference type="PANTHER" id="PTHR43300">
    <property type="entry name" value="ACETYLTRANSFERASE"/>
    <property type="match status" value="1"/>
</dbReference>
<dbReference type="Pfam" id="PF08503">
    <property type="entry name" value="DapH_N"/>
    <property type="match status" value="1"/>
</dbReference>
<dbReference type="Pfam" id="PF00132">
    <property type="entry name" value="Hexapep"/>
    <property type="match status" value="1"/>
</dbReference>
<dbReference type="Pfam" id="PF14602">
    <property type="entry name" value="Hexapep_2"/>
    <property type="match status" value="2"/>
</dbReference>
<dbReference type="SUPFAM" id="SSF51161">
    <property type="entry name" value="Trimeric LpxA-like enzymes"/>
    <property type="match status" value="1"/>
</dbReference>
<dbReference type="PROSITE" id="PS00101">
    <property type="entry name" value="HEXAPEP_TRANSFERASES"/>
    <property type="match status" value="2"/>
</dbReference>
<keyword id="KW-0012">Acyltransferase</keyword>
<keyword id="KW-0028">Amino-acid biosynthesis</keyword>
<keyword id="KW-0220">Diaminopimelate biosynthesis</keyword>
<keyword id="KW-0457">Lysine biosynthesis</keyword>
<keyword id="KW-1185">Reference proteome</keyword>
<keyword id="KW-0677">Repeat</keyword>
<keyword id="KW-0808">Transferase</keyword>
<feature type="chain" id="PRO_0000376706" description="2,3,4,5-tetrahydropyridine-2,6-dicarboxylate N-acetyltransferase">
    <location>
        <begin position="1"/>
        <end position="232"/>
    </location>
</feature>
<protein>
    <recommendedName>
        <fullName evidence="1">2,3,4,5-tetrahydropyridine-2,6-dicarboxylate N-acetyltransferase</fullName>
        <ecNumber evidence="1">2.3.1.89</ecNumber>
    </recommendedName>
    <alternativeName>
        <fullName evidence="1">Tetrahydrodipicolinate N-acetyltransferase</fullName>
        <shortName evidence="1">THP acetyltransferase</shortName>
        <shortName evidence="1">Tetrahydropicolinate acetylase</shortName>
    </alternativeName>
</protein>
<sequence>MSATKMNAQEIIKFIADAKKKTPVKVTFNGELHGTIPWSVVKLGNVLFGDWEEIKPLLVNLEENKTYVVEQDARNSAVPLLDKRDINARIEPGAIIRDQVEIGDNAVIMMGAVINIGAEIGAGTMIDMGAILGGRAIVGKNSHVGAGAVLAGVIEPASAEPVRVGDNVLIGANAVVIEGVQIGSGSVVAAGAIVTQDVPENVVVAGVPARIIKTIDEKTQQKTALEDALRTL</sequence>
<comment type="function">
    <text evidence="1">Catalyzes the transfer of an acetyl group from acetyl-CoA to tetrahydrodipicolinate.</text>
</comment>
<comment type="catalytic activity">
    <reaction evidence="1">
        <text>(S)-2,3,4,5-tetrahydrodipicolinate + acetyl-CoA + H2O = L-2-acetamido-6-oxoheptanedioate + CoA</text>
        <dbReference type="Rhea" id="RHEA:13085"/>
        <dbReference type="ChEBI" id="CHEBI:15377"/>
        <dbReference type="ChEBI" id="CHEBI:16845"/>
        <dbReference type="ChEBI" id="CHEBI:57287"/>
        <dbReference type="ChEBI" id="CHEBI:57288"/>
        <dbReference type="ChEBI" id="CHEBI:58117"/>
        <dbReference type="EC" id="2.3.1.89"/>
    </reaction>
</comment>
<comment type="pathway">
    <text evidence="1">Amino-acid biosynthesis; L-lysine biosynthesis via DAP pathway; LL-2,6-diaminopimelate from (S)-tetrahydrodipicolinate (acetylase route): step 1/3.</text>
</comment>
<comment type="similarity">
    <text evidence="1">Belongs to the transferase hexapeptide repeat family. DapH subfamily.</text>
</comment>